<evidence type="ECO:0000250" key="1"/>
<evidence type="ECO:0000250" key="2">
    <source>
        <dbReference type="UniProtKB" id="P13517"/>
    </source>
</evidence>
<evidence type="ECO:0000250" key="3">
    <source>
        <dbReference type="UniProtKB" id="Q9HGP5"/>
    </source>
</evidence>
<evidence type="ECO:0000256" key="4">
    <source>
        <dbReference type="SAM" id="MobiDB-lite"/>
    </source>
</evidence>
<evidence type="ECO:0000305" key="5"/>
<reference key="1">
    <citation type="journal article" date="2007" name="Science">
        <title>The Fusarium graminearum genome reveals a link between localized polymorphism and pathogen specialization.</title>
        <authorList>
            <person name="Cuomo C.A."/>
            <person name="Gueldener U."/>
            <person name="Xu J.-R."/>
            <person name="Trail F."/>
            <person name="Turgeon B.G."/>
            <person name="Di Pietro A."/>
            <person name="Walton J.D."/>
            <person name="Ma L.-J."/>
            <person name="Baker S.E."/>
            <person name="Rep M."/>
            <person name="Adam G."/>
            <person name="Antoniw J."/>
            <person name="Baldwin T."/>
            <person name="Calvo S.E."/>
            <person name="Chang Y.-L."/>
            <person name="DeCaprio D."/>
            <person name="Gale L.R."/>
            <person name="Gnerre S."/>
            <person name="Goswami R.S."/>
            <person name="Hammond-Kosack K."/>
            <person name="Harris L.J."/>
            <person name="Hilburn K."/>
            <person name="Kennell J.C."/>
            <person name="Kroken S."/>
            <person name="Magnuson J.K."/>
            <person name="Mannhaupt G."/>
            <person name="Mauceli E.W."/>
            <person name="Mewes H.-W."/>
            <person name="Mitterbauer R."/>
            <person name="Muehlbauer G."/>
            <person name="Muensterkoetter M."/>
            <person name="Nelson D."/>
            <person name="O'Donnell K."/>
            <person name="Ouellet T."/>
            <person name="Qi W."/>
            <person name="Quesneville H."/>
            <person name="Roncero M.I.G."/>
            <person name="Seong K.-Y."/>
            <person name="Tetko I.V."/>
            <person name="Urban M."/>
            <person name="Waalwijk C."/>
            <person name="Ward T.J."/>
            <person name="Yao J."/>
            <person name="Birren B.W."/>
            <person name="Kistler H.C."/>
        </authorList>
    </citation>
    <scope>NUCLEOTIDE SEQUENCE [LARGE SCALE GENOMIC DNA]</scope>
    <source>
        <strain>ATCC MYA-4620 / CBS 123657 / FGSC 9075 / NRRL 31084 / PH-1</strain>
    </source>
</reference>
<reference key="2">
    <citation type="journal article" date="2010" name="Nature">
        <title>Comparative genomics reveals mobile pathogenicity chromosomes in Fusarium.</title>
        <authorList>
            <person name="Ma L.-J."/>
            <person name="van der Does H.C."/>
            <person name="Borkovich K.A."/>
            <person name="Coleman J.J."/>
            <person name="Daboussi M.-J."/>
            <person name="Di Pietro A."/>
            <person name="Dufresne M."/>
            <person name="Freitag M."/>
            <person name="Grabherr M."/>
            <person name="Henrissat B."/>
            <person name="Houterman P.M."/>
            <person name="Kang S."/>
            <person name="Shim W.-B."/>
            <person name="Woloshuk C."/>
            <person name="Xie X."/>
            <person name="Xu J.-R."/>
            <person name="Antoniw J."/>
            <person name="Baker S.E."/>
            <person name="Bluhm B.H."/>
            <person name="Breakspear A."/>
            <person name="Brown D.W."/>
            <person name="Butchko R.A.E."/>
            <person name="Chapman S."/>
            <person name="Coulson R."/>
            <person name="Coutinho P.M."/>
            <person name="Danchin E.G.J."/>
            <person name="Diener A."/>
            <person name="Gale L.R."/>
            <person name="Gardiner D.M."/>
            <person name="Goff S."/>
            <person name="Hammond-Kosack K.E."/>
            <person name="Hilburn K."/>
            <person name="Hua-Van A."/>
            <person name="Jonkers W."/>
            <person name="Kazan K."/>
            <person name="Kodira C.D."/>
            <person name="Koehrsen M."/>
            <person name="Kumar L."/>
            <person name="Lee Y.-H."/>
            <person name="Li L."/>
            <person name="Manners J.M."/>
            <person name="Miranda-Saavedra D."/>
            <person name="Mukherjee M."/>
            <person name="Park G."/>
            <person name="Park J."/>
            <person name="Park S.-Y."/>
            <person name="Proctor R.H."/>
            <person name="Regev A."/>
            <person name="Ruiz-Roldan M.C."/>
            <person name="Sain D."/>
            <person name="Sakthikumar S."/>
            <person name="Sykes S."/>
            <person name="Schwartz D.C."/>
            <person name="Turgeon B.G."/>
            <person name="Wapinski I."/>
            <person name="Yoder O."/>
            <person name="Young S."/>
            <person name="Zeng Q."/>
            <person name="Zhou S."/>
            <person name="Galagan J."/>
            <person name="Cuomo C.A."/>
            <person name="Kistler H.C."/>
            <person name="Rep M."/>
        </authorList>
    </citation>
    <scope>GENOME REANNOTATION</scope>
    <source>
        <strain>ATCC MYA-4620 / CBS 123657 / FGSC 9075 / NRRL 31084 / PH-1</strain>
    </source>
</reference>
<reference key="3">
    <citation type="journal article" date="2015" name="BMC Genomics">
        <title>The completed genome sequence of the pathogenic ascomycete fungus Fusarium graminearum.</title>
        <authorList>
            <person name="King R."/>
            <person name="Urban M."/>
            <person name="Hammond-Kosack M.C.U."/>
            <person name="Hassani-Pak K."/>
            <person name="Hammond-Kosack K.E."/>
        </authorList>
    </citation>
    <scope>NUCLEOTIDE SEQUENCE [LARGE SCALE GENOMIC DNA]</scope>
    <source>
        <strain>ATCC MYA-4620 / CBS 123657 / FGSC 9075 / NRRL 31084 / PH-1</strain>
    </source>
</reference>
<comment type="function">
    <text evidence="1">F-actin-capping proteins bind in a Ca(2+)-independent manner to the fast growing ends of actin filaments (barbed end) thereby blocking the exchange of subunits at these ends. Unlike other capping proteins (such as gelsolin and severin), these proteins do not sever actin filaments (By similarity).</text>
</comment>
<comment type="subunit">
    <text evidence="2">Component of the F-actin capping complex, composed of a heterodimer of an alpha and a beta subunit.</text>
</comment>
<comment type="subcellular location">
    <subcellularLocation>
        <location evidence="2">Cytoplasm</location>
        <location evidence="2">Cytoskeleton</location>
        <location evidence="2">Actin patch</location>
    </subcellularLocation>
    <subcellularLocation>
        <location evidence="3">Cytoplasm</location>
        <location evidence="3">Cytoskeleton</location>
    </subcellularLocation>
</comment>
<comment type="similarity">
    <text evidence="5">Belongs to the F-actin-capping protein beta subunit family.</text>
</comment>
<keyword id="KW-0117">Actin capping</keyword>
<keyword id="KW-0009">Actin-binding</keyword>
<keyword id="KW-0963">Cytoplasm</keyword>
<keyword id="KW-0206">Cytoskeleton</keyword>
<keyword id="KW-1185">Reference proteome</keyword>
<feature type="chain" id="PRO_0000256840" description="F-actin-capping protein subunit beta">
    <location>
        <begin position="1"/>
        <end position="282"/>
    </location>
</feature>
<feature type="region of interest" description="Disordered" evidence="4">
    <location>
        <begin position="73"/>
        <end position="103"/>
    </location>
</feature>
<feature type="compositionally biased region" description="Gly residues" evidence="4">
    <location>
        <begin position="87"/>
        <end position="101"/>
    </location>
</feature>
<name>CAPZB_GIBZE</name>
<dbReference type="EMBL" id="DS231663">
    <property type="protein sequence ID" value="ESU06516.1"/>
    <property type="molecule type" value="Genomic_DNA"/>
</dbReference>
<dbReference type="EMBL" id="HG970332">
    <property type="protein sequence ID" value="CEF73318.1"/>
    <property type="molecule type" value="Genomic_DNA"/>
</dbReference>
<dbReference type="RefSeq" id="XP_011317001.1">
    <property type="nucleotide sequence ID" value="XM_011318699.1"/>
</dbReference>
<dbReference type="SMR" id="Q4INI2"/>
<dbReference type="FunCoup" id="Q4INI2">
    <property type="interactions" value="887"/>
</dbReference>
<dbReference type="STRING" id="229533.Q4INI2"/>
<dbReference type="GeneID" id="23548675"/>
<dbReference type="KEGG" id="fgr:FGSG_01226"/>
<dbReference type="VEuPathDB" id="FungiDB:FGRAMPH1_01G03033"/>
<dbReference type="eggNOG" id="KOG3174">
    <property type="taxonomic scope" value="Eukaryota"/>
</dbReference>
<dbReference type="HOGENOM" id="CLU_045864_1_0_1"/>
<dbReference type="InParanoid" id="Q4INI2"/>
<dbReference type="OrthoDB" id="83609at110618"/>
<dbReference type="PHI-base" id="PHI:11500"/>
<dbReference type="Proteomes" id="UP000070720">
    <property type="component" value="Chromosome 1"/>
</dbReference>
<dbReference type="GO" id="GO:0030479">
    <property type="term" value="C:actin cortical patch"/>
    <property type="evidence" value="ECO:0007669"/>
    <property type="project" value="UniProtKB-SubCell"/>
</dbReference>
<dbReference type="GO" id="GO:0008290">
    <property type="term" value="C:F-actin capping protein complex"/>
    <property type="evidence" value="ECO:0007669"/>
    <property type="project" value="InterPro"/>
</dbReference>
<dbReference type="GO" id="GO:0051015">
    <property type="term" value="F:actin filament binding"/>
    <property type="evidence" value="ECO:0007669"/>
    <property type="project" value="TreeGrafter"/>
</dbReference>
<dbReference type="GO" id="GO:0030036">
    <property type="term" value="P:actin cytoskeleton organization"/>
    <property type="evidence" value="ECO:0007669"/>
    <property type="project" value="InterPro"/>
</dbReference>
<dbReference type="GO" id="GO:0051016">
    <property type="term" value="P:barbed-end actin filament capping"/>
    <property type="evidence" value="ECO:0007669"/>
    <property type="project" value="InterPro"/>
</dbReference>
<dbReference type="GO" id="GO:0000902">
    <property type="term" value="P:cell morphogenesis"/>
    <property type="evidence" value="ECO:0007669"/>
    <property type="project" value="TreeGrafter"/>
</dbReference>
<dbReference type="FunFam" id="1.20.58.570:FF:000001">
    <property type="entry name" value="F-actin-capping protein subunit beta"/>
    <property type="match status" value="1"/>
</dbReference>
<dbReference type="FunFam" id="3.90.1150.210:FF:000005">
    <property type="entry name" value="F-actin-capping protein subunit beta"/>
    <property type="match status" value="1"/>
</dbReference>
<dbReference type="Gene3D" id="1.20.58.570">
    <property type="match status" value="1"/>
</dbReference>
<dbReference type="Gene3D" id="3.90.1150.210">
    <property type="entry name" value="F-actin capping protein, beta subunit"/>
    <property type="match status" value="1"/>
</dbReference>
<dbReference type="InterPro" id="IPR037282">
    <property type="entry name" value="CapZ_alpha/beta"/>
</dbReference>
<dbReference type="InterPro" id="IPR042276">
    <property type="entry name" value="CapZ_alpha/beta_2"/>
</dbReference>
<dbReference type="InterPro" id="IPR001698">
    <property type="entry name" value="CAPZB"/>
</dbReference>
<dbReference type="InterPro" id="IPR043175">
    <property type="entry name" value="CAPZB_N"/>
</dbReference>
<dbReference type="InterPro" id="IPR019771">
    <property type="entry name" value="F-actin_capping_bsu_CS"/>
</dbReference>
<dbReference type="PANTHER" id="PTHR10619">
    <property type="entry name" value="F-ACTIN-CAPPING PROTEIN SUBUNIT BETA"/>
    <property type="match status" value="1"/>
</dbReference>
<dbReference type="PANTHER" id="PTHR10619:SF0">
    <property type="entry name" value="F-ACTIN-CAPPING PROTEIN SUBUNIT BETA ISOFORMS 1 AND 2"/>
    <property type="match status" value="1"/>
</dbReference>
<dbReference type="Pfam" id="PF01115">
    <property type="entry name" value="F_actin_cap_B"/>
    <property type="match status" value="1"/>
</dbReference>
<dbReference type="PRINTS" id="PR00192">
    <property type="entry name" value="FACTINCAPB"/>
</dbReference>
<dbReference type="SUPFAM" id="SSF90096">
    <property type="entry name" value="Subunits of heterodimeric actin filament capping protein Capz"/>
    <property type="match status" value="1"/>
</dbReference>
<dbReference type="PROSITE" id="PS00231">
    <property type="entry name" value="F_ACTIN_CAPPING_BETA"/>
    <property type="match status" value="1"/>
</dbReference>
<sequence length="282" mass="31041">MAVDPFDSALDLLRRLNPKQTTDHLNAIISIAPDLTEDLLSSVDQPLTVRRCKQTGRDYLLCDYNRDGDSYRSPWSNQFDPPLDEAGSGGVGAGGNEGAGEGAIPSERVRKMEVKANEAFDVYRDLYYEGGVSSVYFWNLDDGFAGVVLLKKSSPQGGNSEGVWDSIHVFEAIERGRSTHYKLTSTVILTLSTSGGNLGEMDLSGNMTRQVEQDLPVENDDSHIANVGRLVEDMELKMRNLLQEVYFGKAKDVVGDLRSIGSLSEGARDREAQRELIGSMRK</sequence>
<proteinExistence type="inferred from homology"/>
<organism>
    <name type="scientific">Gibberella zeae (strain ATCC MYA-4620 / CBS 123657 / FGSC 9075 / NRRL 31084 / PH-1)</name>
    <name type="common">Wheat head blight fungus</name>
    <name type="synonym">Fusarium graminearum</name>
    <dbReference type="NCBI Taxonomy" id="229533"/>
    <lineage>
        <taxon>Eukaryota</taxon>
        <taxon>Fungi</taxon>
        <taxon>Dikarya</taxon>
        <taxon>Ascomycota</taxon>
        <taxon>Pezizomycotina</taxon>
        <taxon>Sordariomycetes</taxon>
        <taxon>Hypocreomycetidae</taxon>
        <taxon>Hypocreales</taxon>
        <taxon>Nectriaceae</taxon>
        <taxon>Fusarium</taxon>
    </lineage>
</organism>
<protein>
    <recommendedName>
        <fullName>F-actin-capping protein subunit beta</fullName>
    </recommendedName>
</protein>
<gene>
    <name type="primary">CAP2</name>
    <name type="ORF">FGRRES_01226</name>
    <name type="ORF">FGSG_01226</name>
</gene>
<accession>Q4INI2</accession>
<accession>A0A0E0RPZ3</accession>
<accession>V6QW69</accession>